<sequence length="114" mass="12750">MDMLLLVLVCLLTCSGQMLQKQAVISWQRQPCSHWQKLFSPWLIASVVALGSGMLLWIYLLQRLPLSMAYPMLSINLVLVLIGSRLFFHEQISYHNWLGAGAIIIGALLLGGLL</sequence>
<name>ARNE_AERS4</name>
<dbReference type="EMBL" id="CP000644">
    <property type="protein sequence ID" value="ABO91294.1"/>
    <property type="molecule type" value="Genomic_DNA"/>
</dbReference>
<dbReference type="RefSeq" id="WP_005311774.1">
    <property type="nucleotide sequence ID" value="NC_009348.1"/>
</dbReference>
<dbReference type="SMR" id="A4SQX2"/>
<dbReference type="STRING" id="29491.GCA_000820065_03699"/>
<dbReference type="KEGG" id="asa:ASA_3312"/>
<dbReference type="eggNOG" id="COG2076">
    <property type="taxonomic scope" value="Bacteria"/>
</dbReference>
<dbReference type="HOGENOM" id="CLU_131462_5_1_6"/>
<dbReference type="UniPathway" id="UPA00030"/>
<dbReference type="Proteomes" id="UP000000225">
    <property type="component" value="Chromosome"/>
</dbReference>
<dbReference type="GO" id="GO:0005886">
    <property type="term" value="C:plasma membrane"/>
    <property type="evidence" value="ECO:0007669"/>
    <property type="project" value="UniProtKB-SubCell"/>
</dbReference>
<dbReference type="GO" id="GO:1901505">
    <property type="term" value="F:carbohydrate derivative transmembrane transporter activity"/>
    <property type="evidence" value="ECO:0007669"/>
    <property type="project" value="InterPro"/>
</dbReference>
<dbReference type="GO" id="GO:0009245">
    <property type="term" value="P:lipid A biosynthetic process"/>
    <property type="evidence" value="ECO:0007669"/>
    <property type="project" value="UniProtKB-UniRule"/>
</dbReference>
<dbReference type="GO" id="GO:0009103">
    <property type="term" value="P:lipopolysaccharide biosynthetic process"/>
    <property type="evidence" value="ECO:0007669"/>
    <property type="project" value="UniProtKB-UniRule"/>
</dbReference>
<dbReference type="Gene3D" id="1.10.3730.20">
    <property type="match status" value="1"/>
</dbReference>
<dbReference type="HAMAP" id="MF_01869">
    <property type="entry name" value="Flippase_ArnE"/>
    <property type="match status" value="1"/>
</dbReference>
<dbReference type="InterPro" id="IPR000620">
    <property type="entry name" value="EamA_dom"/>
</dbReference>
<dbReference type="InterPro" id="IPR022883">
    <property type="entry name" value="Flippase_ArnE"/>
</dbReference>
<dbReference type="InterPro" id="IPR000390">
    <property type="entry name" value="Small_drug/metabolite_transptr"/>
</dbReference>
<dbReference type="PANTHER" id="PTHR30561:SF23">
    <property type="entry name" value="4-AMINO-4-DEOXY-L-ARABINOSE-PHOSPHOUNDECAPRENOL FLIPPASE SUBUNIT ARNE-RELATED"/>
    <property type="match status" value="1"/>
</dbReference>
<dbReference type="PANTHER" id="PTHR30561">
    <property type="entry name" value="SMR FAMILY PROTON-DEPENDENT DRUG EFFLUX TRANSPORTER SUGE"/>
    <property type="match status" value="1"/>
</dbReference>
<dbReference type="Pfam" id="PF00892">
    <property type="entry name" value="EamA"/>
    <property type="match status" value="1"/>
</dbReference>
<dbReference type="SUPFAM" id="SSF103481">
    <property type="entry name" value="Multidrug resistance efflux transporter EmrE"/>
    <property type="match status" value="1"/>
</dbReference>
<reference key="1">
    <citation type="journal article" date="2008" name="BMC Genomics">
        <title>The genome of Aeromonas salmonicida subsp. salmonicida A449: insights into the evolution of a fish pathogen.</title>
        <authorList>
            <person name="Reith M.E."/>
            <person name="Singh R.K."/>
            <person name="Curtis B."/>
            <person name="Boyd J.M."/>
            <person name="Bouevitch A."/>
            <person name="Kimball J."/>
            <person name="Munholland J."/>
            <person name="Murphy C."/>
            <person name="Sarty D."/>
            <person name="Williams J."/>
            <person name="Nash J.H."/>
            <person name="Johnson S.C."/>
            <person name="Brown L.L."/>
        </authorList>
    </citation>
    <scope>NUCLEOTIDE SEQUENCE [LARGE SCALE GENOMIC DNA]</scope>
    <source>
        <strain>A449</strain>
    </source>
</reference>
<gene>
    <name evidence="1" type="primary">arnE</name>
    <name type="ordered locus">ASA_3312</name>
</gene>
<feature type="chain" id="PRO_0000382952" description="Probable 4-amino-4-deoxy-L-arabinose-phosphoundecaprenol flippase subunit ArnE">
    <location>
        <begin position="1"/>
        <end position="114"/>
    </location>
</feature>
<feature type="transmembrane region" description="Helical" evidence="1">
    <location>
        <begin position="41"/>
        <end position="61"/>
    </location>
</feature>
<feature type="transmembrane region" description="Helical" evidence="1">
    <location>
        <begin position="64"/>
        <end position="84"/>
    </location>
</feature>
<feature type="transmembrane region" description="Helical" evidence="1">
    <location>
        <begin position="94"/>
        <end position="114"/>
    </location>
</feature>
<feature type="domain" description="EamA" evidence="1">
    <location>
        <begin position="53"/>
        <end position="112"/>
    </location>
</feature>
<accession>A4SQX2</accession>
<evidence type="ECO:0000255" key="1">
    <source>
        <dbReference type="HAMAP-Rule" id="MF_01869"/>
    </source>
</evidence>
<organism>
    <name type="scientific">Aeromonas salmonicida (strain A449)</name>
    <dbReference type="NCBI Taxonomy" id="382245"/>
    <lineage>
        <taxon>Bacteria</taxon>
        <taxon>Pseudomonadati</taxon>
        <taxon>Pseudomonadota</taxon>
        <taxon>Gammaproteobacteria</taxon>
        <taxon>Aeromonadales</taxon>
        <taxon>Aeromonadaceae</taxon>
        <taxon>Aeromonas</taxon>
    </lineage>
</organism>
<keyword id="KW-0997">Cell inner membrane</keyword>
<keyword id="KW-1003">Cell membrane</keyword>
<keyword id="KW-0441">Lipid A biosynthesis</keyword>
<keyword id="KW-0444">Lipid biosynthesis</keyword>
<keyword id="KW-0443">Lipid metabolism</keyword>
<keyword id="KW-0448">Lipopolysaccharide biosynthesis</keyword>
<keyword id="KW-0472">Membrane</keyword>
<keyword id="KW-0812">Transmembrane</keyword>
<keyword id="KW-1133">Transmembrane helix</keyword>
<keyword id="KW-0813">Transport</keyword>
<protein>
    <recommendedName>
        <fullName evidence="1">Probable 4-amino-4-deoxy-L-arabinose-phosphoundecaprenol flippase subunit ArnE</fullName>
        <shortName evidence="1">L-Ara4N-phosphoundecaprenol flippase subunit ArnE</shortName>
    </recommendedName>
    <alternativeName>
        <fullName evidence="1">Undecaprenyl phosphate-aminoarabinose flippase subunit ArnE</fullName>
    </alternativeName>
</protein>
<comment type="function">
    <text evidence="1">Translocates 4-amino-4-deoxy-L-arabinose-phosphoundecaprenol (alpha-L-Ara4N-phosphoundecaprenol) from the cytoplasmic to the periplasmic side of the inner membrane.</text>
</comment>
<comment type="pathway">
    <text evidence="1">Bacterial outer membrane biogenesis; lipopolysaccharide biosynthesis.</text>
</comment>
<comment type="subunit">
    <text evidence="1">Heterodimer of ArnE and ArnF.</text>
</comment>
<comment type="subcellular location">
    <subcellularLocation>
        <location evidence="1">Cell inner membrane</location>
        <topology evidence="1">Multi-pass membrane protein</topology>
    </subcellularLocation>
</comment>
<comment type="similarity">
    <text evidence="1">Belongs to the ArnE family.</text>
</comment>
<proteinExistence type="inferred from homology"/>